<name>NFUA_BLOFL</name>
<dbReference type="EMBL" id="BX248583">
    <property type="protein sequence ID" value="CAD83255.1"/>
    <property type="molecule type" value="Genomic_DNA"/>
</dbReference>
<dbReference type="SMR" id="Q7VRN1"/>
<dbReference type="STRING" id="203907.Bfl573"/>
<dbReference type="KEGG" id="bfl:Bfl573"/>
<dbReference type="eggNOG" id="COG0694">
    <property type="taxonomic scope" value="Bacteria"/>
</dbReference>
<dbReference type="HOGENOM" id="CLU_094569_0_0_6"/>
<dbReference type="OrthoDB" id="9785450at2"/>
<dbReference type="Proteomes" id="UP000002192">
    <property type="component" value="Chromosome"/>
</dbReference>
<dbReference type="GO" id="GO:0051539">
    <property type="term" value="F:4 iron, 4 sulfur cluster binding"/>
    <property type="evidence" value="ECO:0007669"/>
    <property type="project" value="UniProtKB-UniRule"/>
</dbReference>
<dbReference type="GO" id="GO:0005506">
    <property type="term" value="F:iron ion binding"/>
    <property type="evidence" value="ECO:0007669"/>
    <property type="project" value="InterPro"/>
</dbReference>
<dbReference type="GO" id="GO:0016226">
    <property type="term" value="P:iron-sulfur cluster assembly"/>
    <property type="evidence" value="ECO:0007669"/>
    <property type="project" value="UniProtKB-UniRule"/>
</dbReference>
<dbReference type="GO" id="GO:0051604">
    <property type="term" value="P:protein maturation"/>
    <property type="evidence" value="ECO:0007669"/>
    <property type="project" value="UniProtKB-UniRule"/>
</dbReference>
<dbReference type="Gene3D" id="3.30.300.130">
    <property type="entry name" value="Fe-S cluster assembly (FSCA)"/>
    <property type="match status" value="1"/>
</dbReference>
<dbReference type="Gene3D" id="2.60.300.12">
    <property type="entry name" value="HesB-like domain"/>
    <property type="match status" value="1"/>
</dbReference>
<dbReference type="HAMAP" id="MF_01637">
    <property type="entry name" value="Fe_S_biogen_NfuA"/>
    <property type="match status" value="1"/>
</dbReference>
<dbReference type="InterPro" id="IPR017726">
    <property type="entry name" value="Fe/S_biogenesis_protein_NfuA"/>
</dbReference>
<dbReference type="InterPro" id="IPR000361">
    <property type="entry name" value="FeS_biogenesis"/>
</dbReference>
<dbReference type="InterPro" id="IPR034904">
    <property type="entry name" value="FSCA_dom_sf"/>
</dbReference>
<dbReference type="InterPro" id="IPR035903">
    <property type="entry name" value="HesB-like_dom_sf"/>
</dbReference>
<dbReference type="InterPro" id="IPR001075">
    <property type="entry name" value="NIF_FeS_clus_asmbl_NifU_C"/>
</dbReference>
<dbReference type="PANTHER" id="PTHR11178:SF51">
    <property type="entry name" value="FE_S BIOGENESIS PROTEIN NFUA"/>
    <property type="match status" value="1"/>
</dbReference>
<dbReference type="PANTHER" id="PTHR11178">
    <property type="entry name" value="IRON-SULFUR CLUSTER SCAFFOLD PROTEIN NFU-RELATED"/>
    <property type="match status" value="1"/>
</dbReference>
<dbReference type="Pfam" id="PF01521">
    <property type="entry name" value="Fe-S_biosyn"/>
    <property type="match status" value="1"/>
</dbReference>
<dbReference type="Pfam" id="PF01106">
    <property type="entry name" value="NifU"/>
    <property type="match status" value="1"/>
</dbReference>
<dbReference type="SUPFAM" id="SSF117916">
    <property type="entry name" value="Fe-S cluster assembly (FSCA) domain-like"/>
    <property type="match status" value="1"/>
</dbReference>
<dbReference type="SUPFAM" id="SSF89360">
    <property type="entry name" value="HesB-like domain"/>
    <property type="match status" value="1"/>
</dbReference>
<evidence type="ECO:0000255" key="1">
    <source>
        <dbReference type="HAMAP-Rule" id="MF_01637"/>
    </source>
</evidence>
<accession>Q7VRN1</accession>
<feature type="chain" id="PRO_0000209474" description="Fe/S biogenesis protein NfuA">
    <location>
        <begin position="1"/>
        <end position="205"/>
    </location>
</feature>
<feature type="binding site" evidence="1">
    <location>
        <position position="162"/>
    </location>
    <ligand>
        <name>[4Fe-4S] cluster</name>
        <dbReference type="ChEBI" id="CHEBI:49883"/>
    </ligand>
</feature>
<feature type="binding site" evidence="1">
    <location>
        <position position="165"/>
    </location>
    <ligand>
        <name>[4Fe-4S] cluster</name>
        <dbReference type="ChEBI" id="CHEBI:49883"/>
    </ligand>
</feature>
<keyword id="KW-0004">4Fe-4S</keyword>
<keyword id="KW-0408">Iron</keyword>
<keyword id="KW-0411">Iron-sulfur</keyword>
<keyword id="KW-0479">Metal-binding</keyword>
<keyword id="KW-1185">Reference proteome</keyword>
<organism>
    <name type="scientific">Blochmanniella floridana</name>
    <dbReference type="NCBI Taxonomy" id="203907"/>
    <lineage>
        <taxon>Bacteria</taxon>
        <taxon>Pseudomonadati</taxon>
        <taxon>Pseudomonadota</taxon>
        <taxon>Gammaproteobacteria</taxon>
        <taxon>Enterobacterales</taxon>
        <taxon>Enterobacteriaceae</taxon>
        <taxon>ant endosymbionts</taxon>
        <taxon>Candidatus Blochmanniella</taxon>
    </lineage>
</organism>
<proteinExistence type="inferred from homology"/>
<reference key="1">
    <citation type="journal article" date="2003" name="Proc. Natl. Acad. Sci. U.S.A.">
        <title>The genome sequence of Blochmannia floridanus: comparative analysis of reduced genomes.</title>
        <authorList>
            <person name="Gil R."/>
            <person name="Silva F.J."/>
            <person name="Zientz E."/>
            <person name="Delmotte F."/>
            <person name="Gonzalez-Candelas F."/>
            <person name="Latorre A."/>
            <person name="Rausell C."/>
            <person name="Kamerbeek J."/>
            <person name="Gadau J."/>
            <person name="Hoelldobler B."/>
            <person name="van Ham R.C.H.J."/>
            <person name="Gross R."/>
            <person name="Moya A."/>
        </authorList>
    </citation>
    <scope>NUCLEOTIDE SEQUENCE [LARGE SCALE GENOMIC DNA]</scope>
</reference>
<sequence>MLHITDTAQKYLIKLLSYQKKSTQIRFSVKNPGTPHAQCNISYYLPKTHHNSKDIEIKFSQFSIYLEKHLIPFIQKTTIDIVSNDLGIQLSIKSPNLYHSKNDNHVNNTQNNINYKSPTLENQIKHILTHQINPQLAMHGGSVSLVKITSDSIAILKFHGGCNGCAMAFYTIKEGIEKTLKKLCPELNGVIDSTQHQPGTHSFFK</sequence>
<gene>
    <name evidence="1" type="primary">nfuA</name>
    <name type="ordered locus">Bfl573</name>
</gene>
<comment type="function">
    <text evidence="1">Involved in iron-sulfur cluster biogenesis. Binds a 4Fe-4S cluster, can transfer this cluster to apoproteins, and thereby intervenes in the maturation of Fe/S proteins. Could also act as a scaffold/chaperone for damaged Fe/S proteins.</text>
</comment>
<comment type="cofactor">
    <cofactor evidence="1">
        <name>[4Fe-4S] cluster</name>
        <dbReference type="ChEBI" id="CHEBI:49883"/>
    </cofactor>
    <text evidence="1">Binds 1 [4Fe-4S] cluster per subunit. The cluster is presumably bound at the interface of two monomers.</text>
</comment>
<comment type="subunit">
    <text evidence="1">Homodimer.</text>
</comment>
<comment type="similarity">
    <text evidence="1">Belongs to the NfuA family.</text>
</comment>
<protein>
    <recommendedName>
        <fullName evidence="1">Fe/S biogenesis protein NfuA</fullName>
    </recommendedName>
</protein>